<evidence type="ECO:0000255" key="1">
    <source>
        <dbReference type="HAMAP-Rule" id="MF_00456"/>
    </source>
</evidence>
<proteinExistence type="inferred from homology"/>
<feature type="chain" id="PRO_1000125213" description="Glutamate 5-kinase">
    <location>
        <begin position="1"/>
        <end position="377"/>
    </location>
</feature>
<feature type="domain" description="PUA" evidence="1">
    <location>
        <begin position="285"/>
        <end position="363"/>
    </location>
</feature>
<feature type="binding site" evidence="1">
    <location>
        <position position="22"/>
    </location>
    <ligand>
        <name>ATP</name>
        <dbReference type="ChEBI" id="CHEBI:30616"/>
    </ligand>
</feature>
<feature type="binding site" evidence="1">
    <location>
        <position position="62"/>
    </location>
    <ligand>
        <name>substrate</name>
    </ligand>
</feature>
<feature type="binding site" evidence="1">
    <location>
        <position position="149"/>
    </location>
    <ligand>
        <name>substrate</name>
    </ligand>
</feature>
<feature type="binding site" evidence="1">
    <location>
        <position position="161"/>
    </location>
    <ligand>
        <name>substrate</name>
    </ligand>
</feature>
<feature type="binding site" evidence="1">
    <location>
        <begin position="181"/>
        <end position="182"/>
    </location>
    <ligand>
        <name>ATP</name>
        <dbReference type="ChEBI" id="CHEBI:30616"/>
    </ligand>
</feature>
<feature type="binding site" evidence="1">
    <location>
        <begin position="223"/>
        <end position="229"/>
    </location>
    <ligand>
        <name>ATP</name>
        <dbReference type="ChEBI" id="CHEBI:30616"/>
    </ligand>
</feature>
<comment type="function">
    <text evidence="1">Catalyzes the transfer of a phosphate group to glutamate to form L-glutamate 5-phosphate.</text>
</comment>
<comment type="catalytic activity">
    <reaction evidence="1">
        <text>L-glutamate + ATP = L-glutamyl 5-phosphate + ADP</text>
        <dbReference type="Rhea" id="RHEA:14877"/>
        <dbReference type="ChEBI" id="CHEBI:29985"/>
        <dbReference type="ChEBI" id="CHEBI:30616"/>
        <dbReference type="ChEBI" id="CHEBI:58274"/>
        <dbReference type="ChEBI" id="CHEBI:456216"/>
        <dbReference type="EC" id="2.7.2.11"/>
    </reaction>
</comment>
<comment type="pathway">
    <text evidence="1">Amino-acid biosynthesis; L-proline biosynthesis; L-glutamate 5-semialdehyde from L-glutamate: step 1/2.</text>
</comment>
<comment type="subcellular location">
    <subcellularLocation>
        <location evidence="1">Cytoplasm</location>
    </subcellularLocation>
</comment>
<comment type="similarity">
    <text evidence="1">Belongs to the glutamate 5-kinase family.</text>
</comment>
<reference key="1">
    <citation type="journal article" date="2008" name="BMC Genomics">
        <title>Comparative genomic analysis of the gut bacterium Bifidobacterium longum reveals loci susceptible to deletion during pure culture growth.</title>
        <authorList>
            <person name="Lee J.H."/>
            <person name="Karamychev V.N."/>
            <person name="Kozyavkin S.A."/>
            <person name="Mills D."/>
            <person name="Pavlov A.R."/>
            <person name="Pavlova N.V."/>
            <person name="Polouchine N.N."/>
            <person name="Richardson P.M."/>
            <person name="Shakhova V.V."/>
            <person name="Slesarev A.I."/>
            <person name="Weimer B."/>
            <person name="O'Sullivan D.J."/>
        </authorList>
    </citation>
    <scope>NUCLEOTIDE SEQUENCE [LARGE SCALE GENOMIC DNA]</scope>
    <source>
        <strain>DJO10A</strain>
    </source>
</reference>
<accession>B3DPS5</accession>
<sequence>MSTPSQAEVRRMIAAAGTIVVKVGSSSLTQPSGHLDPDKLDALAAALAQVRLMGGRVVLVSSGAIAAGFGPLGFDSRPVDVATQQATAAVGQGLLMARYETAFGRFGIRVGQILITAEDTIRATQYRNVERTLDRLLDLGVVPIINENDSLASNEIRFGDNDRLSALVANLVRAEALVLLTDVDALYTAPPSQPGSRRVEYVPNVIDALGDIQVSGSGSKVGTGGMVTKLEAARVAAVSGIPTVLTCASNAGPAMMGDPVGTVFAPVKARGSSRRLWIGFAADPRGTIVVDAGAGQAIRGGRASLLAAGALEVHGDFSAGDPVWIDAESGEHLARGLAGFDSEEIPQMLGRNTAQLKRFLGPQYAHPLVHRDNLVLV</sequence>
<dbReference type="EC" id="2.7.2.11" evidence="1"/>
<dbReference type="EMBL" id="CP000605">
    <property type="protein sequence ID" value="ACD99064.1"/>
    <property type="molecule type" value="Genomic_DNA"/>
</dbReference>
<dbReference type="RefSeq" id="WP_007055074.1">
    <property type="nucleotide sequence ID" value="NZ_AABM02000041.1"/>
</dbReference>
<dbReference type="SMR" id="B3DPS5"/>
<dbReference type="GeneID" id="69578967"/>
<dbReference type="KEGG" id="blj:BLD_1619"/>
<dbReference type="HOGENOM" id="CLU_025400_2_0_11"/>
<dbReference type="UniPathway" id="UPA00098">
    <property type="reaction ID" value="UER00359"/>
</dbReference>
<dbReference type="Proteomes" id="UP000002419">
    <property type="component" value="Chromosome"/>
</dbReference>
<dbReference type="GO" id="GO:0005829">
    <property type="term" value="C:cytosol"/>
    <property type="evidence" value="ECO:0007669"/>
    <property type="project" value="TreeGrafter"/>
</dbReference>
<dbReference type="GO" id="GO:0005524">
    <property type="term" value="F:ATP binding"/>
    <property type="evidence" value="ECO:0007669"/>
    <property type="project" value="UniProtKB-KW"/>
</dbReference>
<dbReference type="GO" id="GO:0004349">
    <property type="term" value="F:glutamate 5-kinase activity"/>
    <property type="evidence" value="ECO:0007669"/>
    <property type="project" value="UniProtKB-UniRule"/>
</dbReference>
<dbReference type="GO" id="GO:0003723">
    <property type="term" value="F:RNA binding"/>
    <property type="evidence" value="ECO:0007669"/>
    <property type="project" value="InterPro"/>
</dbReference>
<dbReference type="GO" id="GO:0055129">
    <property type="term" value="P:L-proline biosynthetic process"/>
    <property type="evidence" value="ECO:0007669"/>
    <property type="project" value="UniProtKB-UniRule"/>
</dbReference>
<dbReference type="CDD" id="cd04242">
    <property type="entry name" value="AAK_G5K_ProB"/>
    <property type="match status" value="1"/>
</dbReference>
<dbReference type="CDD" id="cd21157">
    <property type="entry name" value="PUA_G5K"/>
    <property type="match status" value="1"/>
</dbReference>
<dbReference type="FunFam" id="3.40.1160.10:FF:000018">
    <property type="entry name" value="Glutamate 5-kinase"/>
    <property type="match status" value="1"/>
</dbReference>
<dbReference type="Gene3D" id="3.40.1160.10">
    <property type="entry name" value="Acetylglutamate kinase-like"/>
    <property type="match status" value="1"/>
</dbReference>
<dbReference type="Gene3D" id="2.30.130.10">
    <property type="entry name" value="PUA domain"/>
    <property type="match status" value="1"/>
</dbReference>
<dbReference type="HAMAP" id="MF_00456">
    <property type="entry name" value="ProB"/>
    <property type="match status" value="1"/>
</dbReference>
<dbReference type="InterPro" id="IPR036393">
    <property type="entry name" value="AceGlu_kinase-like_sf"/>
</dbReference>
<dbReference type="InterPro" id="IPR001048">
    <property type="entry name" value="Asp/Glu/Uridylate_kinase"/>
</dbReference>
<dbReference type="InterPro" id="IPR041739">
    <property type="entry name" value="G5K_ProB"/>
</dbReference>
<dbReference type="InterPro" id="IPR001057">
    <property type="entry name" value="Glu/AcGlu_kinase"/>
</dbReference>
<dbReference type="InterPro" id="IPR011529">
    <property type="entry name" value="Glu_5kinase"/>
</dbReference>
<dbReference type="InterPro" id="IPR005715">
    <property type="entry name" value="Glu_5kinase/COase_Synthase"/>
</dbReference>
<dbReference type="InterPro" id="IPR019797">
    <property type="entry name" value="Glutamate_5-kinase_CS"/>
</dbReference>
<dbReference type="InterPro" id="IPR002478">
    <property type="entry name" value="PUA"/>
</dbReference>
<dbReference type="InterPro" id="IPR015947">
    <property type="entry name" value="PUA-like_sf"/>
</dbReference>
<dbReference type="InterPro" id="IPR036974">
    <property type="entry name" value="PUA_sf"/>
</dbReference>
<dbReference type="NCBIfam" id="TIGR01027">
    <property type="entry name" value="proB"/>
    <property type="match status" value="1"/>
</dbReference>
<dbReference type="PANTHER" id="PTHR43654">
    <property type="entry name" value="GLUTAMATE 5-KINASE"/>
    <property type="match status" value="1"/>
</dbReference>
<dbReference type="PANTHER" id="PTHR43654:SF1">
    <property type="entry name" value="ISOPENTENYL PHOSPHATE KINASE"/>
    <property type="match status" value="1"/>
</dbReference>
<dbReference type="Pfam" id="PF00696">
    <property type="entry name" value="AA_kinase"/>
    <property type="match status" value="1"/>
</dbReference>
<dbReference type="Pfam" id="PF01472">
    <property type="entry name" value="PUA"/>
    <property type="match status" value="1"/>
</dbReference>
<dbReference type="PIRSF" id="PIRSF000729">
    <property type="entry name" value="GK"/>
    <property type="match status" value="1"/>
</dbReference>
<dbReference type="PRINTS" id="PR00474">
    <property type="entry name" value="GLU5KINASE"/>
</dbReference>
<dbReference type="SMART" id="SM00359">
    <property type="entry name" value="PUA"/>
    <property type="match status" value="1"/>
</dbReference>
<dbReference type="SUPFAM" id="SSF53633">
    <property type="entry name" value="Carbamate kinase-like"/>
    <property type="match status" value="1"/>
</dbReference>
<dbReference type="SUPFAM" id="SSF88697">
    <property type="entry name" value="PUA domain-like"/>
    <property type="match status" value="1"/>
</dbReference>
<dbReference type="PROSITE" id="PS00902">
    <property type="entry name" value="GLUTAMATE_5_KINASE"/>
    <property type="match status" value="1"/>
</dbReference>
<dbReference type="PROSITE" id="PS50890">
    <property type="entry name" value="PUA"/>
    <property type="match status" value="1"/>
</dbReference>
<name>PROB_BIFLD</name>
<protein>
    <recommendedName>
        <fullName evidence="1">Glutamate 5-kinase</fullName>
        <ecNumber evidence="1">2.7.2.11</ecNumber>
    </recommendedName>
    <alternativeName>
        <fullName evidence="1">Gamma-glutamyl kinase</fullName>
        <shortName evidence="1">GK</shortName>
    </alternativeName>
</protein>
<gene>
    <name evidence="1" type="primary">proB</name>
    <name type="ordered locus">BLD_1619</name>
</gene>
<organism>
    <name type="scientific">Bifidobacterium longum (strain DJO10A)</name>
    <dbReference type="NCBI Taxonomy" id="205913"/>
    <lineage>
        <taxon>Bacteria</taxon>
        <taxon>Bacillati</taxon>
        <taxon>Actinomycetota</taxon>
        <taxon>Actinomycetes</taxon>
        <taxon>Bifidobacteriales</taxon>
        <taxon>Bifidobacteriaceae</taxon>
        <taxon>Bifidobacterium</taxon>
    </lineage>
</organism>
<keyword id="KW-0028">Amino-acid biosynthesis</keyword>
<keyword id="KW-0067">ATP-binding</keyword>
<keyword id="KW-0963">Cytoplasm</keyword>
<keyword id="KW-0418">Kinase</keyword>
<keyword id="KW-0547">Nucleotide-binding</keyword>
<keyword id="KW-0641">Proline biosynthesis</keyword>
<keyword id="KW-0808">Transferase</keyword>